<proteinExistence type="evidence at transcript level"/>
<evidence type="ECO:0000255" key="1"/>
<reference key="1">
    <citation type="journal article" date="2004" name="Nucleic Acids Res.">
        <title>PEDE (Pig EST Data Explorer): construction of a database for ESTs derived from porcine full-length cDNA libraries.</title>
        <authorList>
            <person name="Uenishi H."/>
            <person name="Eguchi T."/>
            <person name="Suzuki K."/>
            <person name="Sawazaki T."/>
            <person name="Toki D."/>
            <person name="Shinkai H."/>
            <person name="Okumura N."/>
            <person name="Hamasima N."/>
            <person name="Awata T."/>
        </authorList>
    </citation>
    <scope>NUCLEOTIDE SEQUENCE [LARGE SCALE MRNA]</scope>
    <source>
        <tissue>Lung</tissue>
        <tissue>Testis</tissue>
    </source>
</reference>
<name>CC127_PIG</name>
<gene>
    <name type="primary">CCDC127</name>
</gene>
<dbReference type="EMBL" id="AK231814">
    <property type="status" value="NOT_ANNOTATED_CDS"/>
    <property type="molecule type" value="mRNA"/>
</dbReference>
<dbReference type="EMBL" id="AK238475">
    <property type="status" value="NOT_ANNOTATED_CDS"/>
    <property type="molecule type" value="mRNA"/>
</dbReference>
<dbReference type="EMBL" id="AK238548">
    <property type="status" value="NOT_ANNOTATED_CDS"/>
    <property type="molecule type" value="mRNA"/>
</dbReference>
<dbReference type="RefSeq" id="XP_020932595.1">
    <property type="nucleotide sequence ID" value="XM_021076936.1"/>
</dbReference>
<dbReference type="RefSeq" id="XP_020932596.1">
    <property type="nucleotide sequence ID" value="XM_021076937.1"/>
</dbReference>
<dbReference type="RefSeq" id="XP_020932597.1">
    <property type="nucleotide sequence ID" value="XM_021076938.1"/>
</dbReference>
<dbReference type="RefSeq" id="XP_020932598.1">
    <property type="nucleotide sequence ID" value="XM_021076939.1"/>
</dbReference>
<dbReference type="SMR" id="P0C267"/>
<dbReference type="FunCoup" id="P0C267">
    <property type="interactions" value="1141"/>
</dbReference>
<dbReference type="STRING" id="9823.ENSSSCP00000033372"/>
<dbReference type="PaxDb" id="9823-ENSSSCP00000023824"/>
<dbReference type="PeptideAtlas" id="P0C267"/>
<dbReference type="Ensembl" id="ENSSSCT00000061778.3">
    <property type="protein sequence ID" value="ENSSSCP00000033372.1"/>
    <property type="gene ID" value="ENSSSCG00000036783.3"/>
</dbReference>
<dbReference type="Ensembl" id="ENSSSCT00025041831.1">
    <property type="protein sequence ID" value="ENSSSCP00025017805.1"/>
    <property type="gene ID" value="ENSSSCG00025030782.1"/>
</dbReference>
<dbReference type="Ensembl" id="ENSSSCT00035019266.1">
    <property type="protein sequence ID" value="ENSSSCP00035006836.1"/>
    <property type="gene ID" value="ENSSSCG00035015144.1"/>
</dbReference>
<dbReference type="Ensembl" id="ENSSSCT00045048674.1">
    <property type="protein sequence ID" value="ENSSSCP00045033840.1"/>
    <property type="gene ID" value="ENSSSCG00045028585.1"/>
</dbReference>
<dbReference type="Ensembl" id="ENSSSCT00045048744.1">
    <property type="protein sequence ID" value="ENSSSCP00045033893.1"/>
    <property type="gene ID" value="ENSSSCG00045028585.1"/>
</dbReference>
<dbReference type="Ensembl" id="ENSSSCT00045048801.1">
    <property type="protein sequence ID" value="ENSSSCP00045033940.1"/>
    <property type="gene ID" value="ENSSSCG00045028585.1"/>
</dbReference>
<dbReference type="Ensembl" id="ENSSSCT00055028522.1">
    <property type="protein sequence ID" value="ENSSSCP00055022728.1"/>
    <property type="gene ID" value="ENSSSCG00055014459.1"/>
</dbReference>
<dbReference type="Ensembl" id="ENSSSCT00065108330.1">
    <property type="protein sequence ID" value="ENSSSCP00065048400.1"/>
    <property type="gene ID" value="ENSSSCG00065078211.1"/>
</dbReference>
<dbReference type="Ensembl" id="ENSSSCT00090003135">
    <property type="protein sequence ID" value="ENSSSCP00090001928"/>
    <property type="gene ID" value="ENSSSCG00090001913"/>
</dbReference>
<dbReference type="Ensembl" id="ENSSSCT00105056155">
    <property type="protein sequence ID" value="ENSSSCP00105039609"/>
    <property type="gene ID" value="ENSSSCG00105029507"/>
</dbReference>
<dbReference type="Ensembl" id="ENSSSCT00110070603">
    <property type="protein sequence ID" value="ENSSSCP00110049646"/>
    <property type="gene ID" value="ENSSSCG00110037180"/>
</dbReference>
<dbReference type="Ensembl" id="ENSSSCT00115015776">
    <property type="protein sequence ID" value="ENSSSCP00115014878"/>
    <property type="gene ID" value="ENSSSCG00115009110"/>
</dbReference>
<dbReference type="Ensembl" id="ENSSSCT00130007453">
    <property type="protein sequence ID" value="ENSSSCP00130004939"/>
    <property type="gene ID" value="ENSSSCG00130004051"/>
</dbReference>
<dbReference type="GeneID" id="102163440"/>
<dbReference type="VGNC" id="VGNC:86254">
    <property type="gene designation" value="CCDC127"/>
</dbReference>
<dbReference type="eggNOG" id="ENOG502QVKQ">
    <property type="taxonomic scope" value="Eukaryota"/>
</dbReference>
<dbReference type="GeneTree" id="ENSGT00390000008818"/>
<dbReference type="HOGENOM" id="CLU_072814_0_0_1"/>
<dbReference type="InParanoid" id="P0C267"/>
<dbReference type="OMA" id="YWELIVE"/>
<dbReference type="OrthoDB" id="10064762at2759"/>
<dbReference type="Proteomes" id="UP000008227">
    <property type="component" value="Chromosome 16"/>
</dbReference>
<dbReference type="Proteomes" id="UP000314985">
    <property type="component" value="Unplaced"/>
</dbReference>
<dbReference type="Proteomes" id="UP000694570">
    <property type="component" value="Unplaced"/>
</dbReference>
<dbReference type="Proteomes" id="UP000694571">
    <property type="component" value="Unplaced"/>
</dbReference>
<dbReference type="Proteomes" id="UP000694720">
    <property type="component" value="Unplaced"/>
</dbReference>
<dbReference type="Proteomes" id="UP000694722">
    <property type="component" value="Unplaced"/>
</dbReference>
<dbReference type="Proteomes" id="UP000694723">
    <property type="component" value="Unplaced"/>
</dbReference>
<dbReference type="Proteomes" id="UP000694724">
    <property type="component" value="Unplaced"/>
</dbReference>
<dbReference type="Proteomes" id="UP000694725">
    <property type="component" value="Unplaced"/>
</dbReference>
<dbReference type="Proteomes" id="UP000694726">
    <property type="component" value="Unplaced"/>
</dbReference>
<dbReference type="Proteomes" id="UP000694727">
    <property type="component" value="Unplaced"/>
</dbReference>
<dbReference type="Proteomes" id="UP000694728">
    <property type="component" value="Unplaced"/>
</dbReference>
<dbReference type="Bgee" id="ENSSSCG00000036783">
    <property type="expression patterns" value="Expressed in oocyte and 46 other cell types or tissues"/>
</dbReference>
<dbReference type="InterPro" id="IPR034607">
    <property type="entry name" value="CCDC127"/>
</dbReference>
<dbReference type="PANTHER" id="PTHR31958">
    <property type="entry name" value="COILED-COIL DOMAIN-CONTAINING PROTEIN 127"/>
    <property type="match status" value="1"/>
</dbReference>
<dbReference type="PANTHER" id="PTHR31958:SF2">
    <property type="entry name" value="COILED-COIL DOMAIN-CONTAINING PROTEIN 127"/>
    <property type="match status" value="1"/>
</dbReference>
<protein>
    <recommendedName>
        <fullName>Coiled-coil domain-containing protein 127</fullName>
    </recommendedName>
</protein>
<accession>P0C267</accession>
<organism>
    <name type="scientific">Sus scrofa</name>
    <name type="common">Pig</name>
    <dbReference type="NCBI Taxonomy" id="9823"/>
    <lineage>
        <taxon>Eukaryota</taxon>
        <taxon>Metazoa</taxon>
        <taxon>Chordata</taxon>
        <taxon>Craniata</taxon>
        <taxon>Vertebrata</taxon>
        <taxon>Euteleostomi</taxon>
        <taxon>Mammalia</taxon>
        <taxon>Eutheria</taxon>
        <taxon>Laurasiatheria</taxon>
        <taxon>Artiodactyla</taxon>
        <taxon>Suina</taxon>
        <taxon>Suidae</taxon>
        <taxon>Sus</taxon>
    </lineage>
</organism>
<keyword id="KW-0175">Coiled coil</keyword>
<keyword id="KW-1185">Reference proteome</keyword>
<feature type="chain" id="PRO_0000263752" description="Coiled-coil domain-containing protein 127">
    <location>
        <begin position="1"/>
        <end position="258"/>
    </location>
</feature>
<feature type="coiled-coil region" evidence="1">
    <location>
        <begin position="50"/>
        <end position="170"/>
    </location>
</feature>
<sequence length="258" mass="30289">MNNLNDPPNWNIRPNSRADGGDGSRWNYALLVPMLGLAAFRWIWSRESQKEIEKEKEACRQRTAAFQRDLEARYHATISESRRAVARLSLELEKEQNRTTSYREALISQGRKMVEEKKLLEQERAQVLQEKRQPLRSAYLSCLDKEADWQRRARLLLREFEEALAERQSIYCSLVLPRGRRLDIEKGLLVRASTDPLAVDLEMAAGLSDIFKHDTHCGGVWNTSKRQNGRLMWLYLQYWELVVELKKFKRVEKAILEK</sequence>